<reference key="1">
    <citation type="journal article" date="2009" name="BMC Microbiol.">
        <title>The genome sequence of Geobacter metallireducens: features of metabolism, physiology and regulation common and dissimilar to Geobacter sulfurreducens.</title>
        <authorList>
            <person name="Aklujkar M."/>
            <person name="Krushkal J."/>
            <person name="DiBartolo G."/>
            <person name="Lapidus A."/>
            <person name="Land M.L."/>
            <person name="Lovley D.R."/>
        </authorList>
    </citation>
    <scope>NUCLEOTIDE SEQUENCE [LARGE SCALE GENOMIC DNA]</scope>
    <source>
        <strain>ATCC 53774 / DSM 7210 / GS-15</strain>
    </source>
</reference>
<dbReference type="EC" id="4.3.3.7" evidence="1"/>
<dbReference type="EMBL" id="CP000148">
    <property type="protein sequence ID" value="ABB30457.1"/>
    <property type="molecule type" value="Genomic_DNA"/>
</dbReference>
<dbReference type="RefSeq" id="WP_004512800.1">
    <property type="nucleotide sequence ID" value="NC_007517.1"/>
</dbReference>
<dbReference type="SMR" id="Q39Z67"/>
<dbReference type="STRING" id="269799.Gmet_0211"/>
<dbReference type="KEGG" id="gme:Gmet_0211"/>
<dbReference type="eggNOG" id="COG0329">
    <property type="taxonomic scope" value="Bacteria"/>
</dbReference>
<dbReference type="HOGENOM" id="CLU_049343_7_1_7"/>
<dbReference type="UniPathway" id="UPA00034">
    <property type="reaction ID" value="UER00017"/>
</dbReference>
<dbReference type="Proteomes" id="UP000007073">
    <property type="component" value="Chromosome"/>
</dbReference>
<dbReference type="GO" id="GO:0005829">
    <property type="term" value="C:cytosol"/>
    <property type="evidence" value="ECO:0007669"/>
    <property type="project" value="TreeGrafter"/>
</dbReference>
<dbReference type="GO" id="GO:0008840">
    <property type="term" value="F:4-hydroxy-tetrahydrodipicolinate synthase activity"/>
    <property type="evidence" value="ECO:0007669"/>
    <property type="project" value="UniProtKB-UniRule"/>
</dbReference>
<dbReference type="GO" id="GO:0019877">
    <property type="term" value="P:diaminopimelate biosynthetic process"/>
    <property type="evidence" value="ECO:0007669"/>
    <property type="project" value="UniProtKB-UniRule"/>
</dbReference>
<dbReference type="GO" id="GO:0009089">
    <property type="term" value="P:lysine biosynthetic process via diaminopimelate"/>
    <property type="evidence" value="ECO:0007669"/>
    <property type="project" value="UniProtKB-UniRule"/>
</dbReference>
<dbReference type="CDD" id="cd00950">
    <property type="entry name" value="DHDPS"/>
    <property type="match status" value="1"/>
</dbReference>
<dbReference type="Gene3D" id="3.20.20.70">
    <property type="entry name" value="Aldolase class I"/>
    <property type="match status" value="1"/>
</dbReference>
<dbReference type="HAMAP" id="MF_00418">
    <property type="entry name" value="DapA"/>
    <property type="match status" value="1"/>
</dbReference>
<dbReference type="InterPro" id="IPR013785">
    <property type="entry name" value="Aldolase_TIM"/>
</dbReference>
<dbReference type="InterPro" id="IPR005263">
    <property type="entry name" value="DapA"/>
</dbReference>
<dbReference type="InterPro" id="IPR002220">
    <property type="entry name" value="DapA-like"/>
</dbReference>
<dbReference type="InterPro" id="IPR020625">
    <property type="entry name" value="Schiff_base-form_aldolases_AS"/>
</dbReference>
<dbReference type="InterPro" id="IPR020624">
    <property type="entry name" value="Schiff_base-form_aldolases_CS"/>
</dbReference>
<dbReference type="NCBIfam" id="TIGR00674">
    <property type="entry name" value="dapA"/>
    <property type="match status" value="1"/>
</dbReference>
<dbReference type="PANTHER" id="PTHR12128:SF66">
    <property type="entry name" value="4-HYDROXY-2-OXOGLUTARATE ALDOLASE, MITOCHONDRIAL"/>
    <property type="match status" value="1"/>
</dbReference>
<dbReference type="PANTHER" id="PTHR12128">
    <property type="entry name" value="DIHYDRODIPICOLINATE SYNTHASE"/>
    <property type="match status" value="1"/>
</dbReference>
<dbReference type="Pfam" id="PF00701">
    <property type="entry name" value="DHDPS"/>
    <property type="match status" value="1"/>
</dbReference>
<dbReference type="PIRSF" id="PIRSF001365">
    <property type="entry name" value="DHDPS"/>
    <property type="match status" value="1"/>
</dbReference>
<dbReference type="PRINTS" id="PR00146">
    <property type="entry name" value="DHPICSNTHASE"/>
</dbReference>
<dbReference type="SMART" id="SM01130">
    <property type="entry name" value="DHDPS"/>
    <property type="match status" value="1"/>
</dbReference>
<dbReference type="SUPFAM" id="SSF51569">
    <property type="entry name" value="Aldolase"/>
    <property type="match status" value="1"/>
</dbReference>
<dbReference type="PROSITE" id="PS00665">
    <property type="entry name" value="DHDPS_1"/>
    <property type="match status" value="1"/>
</dbReference>
<dbReference type="PROSITE" id="PS00666">
    <property type="entry name" value="DHDPS_2"/>
    <property type="match status" value="1"/>
</dbReference>
<proteinExistence type="inferred from homology"/>
<sequence length="290" mass="31125">MFKGSIVAIVTPFNNGQVDFEKLRELVEFQISNGTDAIVPCGTTGEASTLDYDEHMDVVKTVIEQVNKRVPVIAGTGSNSTAEAIELSQKAKEVGADGVLLVTPYYNKPTQEGLVRHYTAIADAVAIPQILYNVPGRTGVNMLPETVARLAPHKNIVAIKEATGSLQQASEILALCGDKIDVLCGDDFITFPMMACGAKGVISVLANIMPKTVAELTDAFYAGDMEKARQLHLQTLKIGNAMFIESNPIPVKTALGLMGKCSDEVRLPLCPMGAANKEKLAAIMKEYELI</sequence>
<organism>
    <name type="scientific">Geobacter metallireducens (strain ATCC 53774 / DSM 7210 / GS-15)</name>
    <dbReference type="NCBI Taxonomy" id="269799"/>
    <lineage>
        <taxon>Bacteria</taxon>
        <taxon>Pseudomonadati</taxon>
        <taxon>Thermodesulfobacteriota</taxon>
        <taxon>Desulfuromonadia</taxon>
        <taxon>Geobacterales</taxon>
        <taxon>Geobacteraceae</taxon>
        <taxon>Geobacter</taxon>
    </lineage>
</organism>
<protein>
    <recommendedName>
        <fullName evidence="1">4-hydroxy-tetrahydrodipicolinate synthase</fullName>
        <shortName evidence="1">HTPA synthase</shortName>
        <ecNumber evidence="1">4.3.3.7</ecNumber>
    </recommendedName>
</protein>
<keyword id="KW-0028">Amino-acid biosynthesis</keyword>
<keyword id="KW-0963">Cytoplasm</keyword>
<keyword id="KW-0220">Diaminopimelate biosynthesis</keyword>
<keyword id="KW-0456">Lyase</keyword>
<keyword id="KW-0457">Lysine biosynthesis</keyword>
<keyword id="KW-1185">Reference proteome</keyword>
<keyword id="KW-0704">Schiff base</keyword>
<gene>
    <name evidence="1" type="primary">dapA</name>
    <name type="ordered locus">Gmet_0211</name>
</gene>
<accession>Q39Z67</accession>
<comment type="function">
    <text evidence="1">Catalyzes the condensation of (S)-aspartate-beta-semialdehyde [(S)-ASA] and pyruvate to 4-hydroxy-tetrahydrodipicolinate (HTPA).</text>
</comment>
<comment type="catalytic activity">
    <reaction evidence="1">
        <text>L-aspartate 4-semialdehyde + pyruvate = (2S,4S)-4-hydroxy-2,3,4,5-tetrahydrodipicolinate + H2O + H(+)</text>
        <dbReference type="Rhea" id="RHEA:34171"/>
        <dbReference type="ChEBI" id="CHEBI:15361"/>
        <dbReference type="ChEBI" id="CHEBI:15377"/>
        <dbReference type="ChEBI" id="CHEBI:15378"/>
        <dbReference type="ChEBI" id="CHEBI:67139"/>
        <dbReference type="ChEBI" id="CHEBI:537519"/>
        <dbReference type="EC" id="4.3.3.7"/>
    </reaction>
</comment>
<comment type="pathway">
    <text evidence="1">Amino-acid biosynthesis; L-lysine biosynthesis via DAP pathway; (S)-tetrahydrodipicolinate from L-aspartate: step 3/4.</text>
</comment>
<comment type="subunit">
    <text evidence="1">Homotetramer; dimer of dimers.</text>
</comment>
<comment type="subcellular location">
    <subcellularLocation>
        <location evidence="1">Cytoplasm</location>
    </subcellularLocation>
</comment>
<comment type="similarity">
    <text evidence="1">Belongs to the DapA family.</text>
</comment>
<comment type="caution">
    <text evidence="2">Was originally thought to be a dihydrodipicolinate synthase (DHDPS), catalyzing the condensation of (S)-aspartate-beta-semialdehyde [(S)-ASA] and pyruvate to dihydrodipicolinate (DHDP). However, it was shown in E.coli that the product of the enzymatic reaction is not dihydrodipicolinate but in fact (4S)-4-hydroxy-2,3,4,5-tetrahydro-(2S)-dipicolinic acid (HTPA), and that the consecutive dehydration reaction leading to DHDP is not spontaneous but catalyzed by DapB.</text>
</comment>
<evidence type="ECO:0000255" key="1">
    <source>
        <dbReference type="HAMAP-Rule" id="MF_00418"/>
    </source>
</evidence>
<evidence type="ECO:0000305" key="2"/>
<feature type="chain" id="PRO_1000050190" description="4-hydroxy-tetrahydrodipicolinate synthase">
    <location>
        <begin position="1"/>
        <end position="290"/>
    </location>
</feature>
<feature type="active site" description="Proton donor/acceptor" evidence="1">
    <location>
        <position position="132"/>
    </location>
</feature>
<feature type="active site" description="Schiff-base intermediate with substrate" evidence="1">
    <location>
        <position position="160"/>
    </location>
</feature>
<feature type="binding site" evidence="1">
    <location>
        <position position="44"/>
    </location>
    <ligand>
        <name>pyruvate</name>
        <dbReference type="ChEBI" id="CHEBI:15361"/>
    </ligand>
</feature>
<feature type="binding site" evidence="1">
    <location>
        <position position="202"/>
    </location>
    <ligand>
        <name>pyruvate</name>
        <dbReference type="ChEBI" id="CHEBI:15361"/>
    </ligand>
</feature>
<feature type="site" description="Part of a proton relay during catalysis" evidence="1">
    <location>
        <position position="43"/>
    </location>
</feature>
<feature type="site" description="Part of a proton relay during catalysis" evidence="1">
    <location>
        <position position="106"/>
    </location>
</feature>
<name>DAPA_GEOMG</name>